<feature type="chain" id="PRO_0000342181" description="Aldehyde dehydrogenase family 3 member A2">
    <location>
        <begin position="1"/>
        <end position="485"/>
    </location>
</feature>
<feature type="topological domain" description="Cytoplasmic">
    <location>
        <begin position="1"/>
        <end position="463"/>
    </location>
</feature>
<feature type="transmembrane region" description="Helical" evidence="4">
    <location>
        <begin position="464"/>
        <end position="484"/>
    </location>
</feature>
<feature type="short sequence motif" description="Prevents secretion from ER" evidence="1">
    <location>
        <begin position="481"/>
        <end position="484"/>
    </location>
</feature>
<feature type="active site" evidence="5">
    <location>
        <position position="207"/>
    </location>
</feature>
<feature type="active site" evidence="6">
    <location>
        <position position="241"/>
    </location>
</feature>
<feature type="binding site" evidence="4">
    <location>
        <begin position="185"/>
        <end position="190"/>
    </location>
    <ligand>
        <name>NAD(+)</name>
        <dbReference type="ChEBI" id="CHEBI:57540"/>
    </ligand>
</feature>
<feature type="modified residue" description="Phosphoserine" evidence="3">
    <location>
        <position position="293"/>
    </location>
</feature>
<sequence>MELEVRRVRQAFLSGRSRPLRFRLQQLEALRRMVQEREKDILAAIAADLCKSEFNVYSQEVITVLGEIDFMLENLPEWVTAKPVKKNVLTMLDEAYIQPQPLGVVLIIGAWNYPFVLTIQPLIGAIAAGNAVIIKPSELSENTAKMLAKLLPQYLDQDLYIVINGGVEETTELLKQRFDHIFYTGNTAVGKIVMEAAAKHLTPVTLELGGKSPCYIDKDCDLDIVCRRITWGKYMNCGQTCIAPDYILCEASLQNQIVWKIKETVKEFYGENIKESPDYERIINLRHFKRILSLLEGQKIAFGGETDEATRYIAPTVLTDVDPKTKVMQEEIFGPILPIVPVKNVDEAINFINEREKPLALYVFSHNHKLIKRMIDETSSGGVTGNDVIMHFMLNSFPFGGVGSSGMGAYHGKHSFDTFSHQRPCLLKSLKREGANKLRYPPNSQSKVDWGKFFLLKRFNKEKLGLLLLTFLGIVAAVLVKAEYY</sequence>
<accession>Q5RF60</accession>
<organism>
    <name type="scientific">Pongo abelii</name>
    <name type="common">Sumatran orangutan</name>
    <name type="synonym">Pongo pygmaeus abelii</name>
    <dbReference type="NCBI Taxonomy" id="9601"/>
    <lineage>
        <taxon>Eukaryota</taxon>
        <taxon>Metazoa</taxon>
        <taxon>Chordata</taxon>
        <taxon>Craniata</taxon>
        <taxon>Vertebrata</taxon>
        <taxon>Euteleostomi</taxon>
        <taxon>Mammalia</taxon>
        <taxon>Eutheria</taxon>
        <taxon>Euarchontoglires</taxon>
        <taxon>Primates</taxon>
        <taxon>Haplorrhini</taxon>
        <taxon>Catarrhini</taxon>
        <taxon>Hominidae</taxon>
        <taxon>Pongo</taxon>
    </lineage>
</organism>
<reference key="1">
    <citation type="submission" date="2004-11" db="EMBL/GenBank/DDBJ databases">
        <authorList>
            <consortium name="The German cDNA consortium"/>
        </authorList>
    </citation>
    <scope>NUCLEOTIDE SEQUENCE [LARGE SCALE MRNA]</scope>
    <source>
        <tissue>Kidney</tissue>
    </source>
</reference>
<protein>
    <recommendedName>
        <fullName>Aldehyde dehydrogenase family 3 member A2</fullName>
        <ecNumber evidence="3">1.2.1.3</ecNumber>
        <ecNumber evidence="3">1.2.1.94</ecNumber>
    </recommendedName>
    <alternativeName>
        <fullName>Fatty aldehyde dehydrogenase</fullName>
    </alternativeName>
</protein>
<dbReference type="EC" id="1.2.1.3" evidence="3"/>
<dbReference type="EC" id="1.2.1.94" evidence="3"/>
<dbReference type="EMBL" id="CR857301">
    <property type="protein sequence ID" value="CAH89597.1"/>
    <property type="molecule type" value="mRNA"/>
</dbReference>
<dbReference type="RefSeq" id="NP_001124709.1">
    <property type="nucleotide sequence ID" value="NM_001131237.2"/>
</dbReference>
<dbReference type="SMR" id="Q5RF60"/>
<dbReference type="FunCoup" id="Q5RF60">
    <property type="interactions" value="3049"/>
</dbReference>
<dbReference type="STRING" id="9601.ENSPPYP00000023716"/>
<dbReference type="Ensembl" id="ENSPPYT00000055044.1">
    <property type="protein sequence ID" value="ENSPPYP00000039570.1"/>
    <property type="gene ID" value="ENSPPYG00000008838.3"/>
</dbReference>
<dbReference type="GeneID" id="100171557"/>
<dbReference type="KEGG" id="pon:100171557"/>
<dbReference type="CTD" id="224"/>
<dbReference type="eggNOG" id="KOG2456">
    <property type="taxonomic scope" value="Eukaryota"/>
</dbReference>
<dbReference type="GeneTree" id="ENSGT00940000157944"/>
<dbReference type="InParanoid" id="Q5RF60"/>
<dbReference type="OrthoDB" id="440325at2759"/>
<dbReference type="Proteomes" id="UP000001595">
    <property type="component" value="Unplaced"/>
</dbReference>
<dbReference type="GO" id="GO:0005789">
    <property type="term" value="C:endoplasmic reticulum membrane"/>
    <property type="evidence" value="ECO:0007669"/>
    <property type="project" value="UniProtKB-SubCell"/>
</dbReference>
<dbReference type="GO" id="GO:0004028">
    <property type="term" value="F:3-chloroallyl aldehyde dehydrogenase activity"/>
    <property type="evidence" value="ECO:0007669"/>
    <property type="project" value="TreeGrafter"/>
</dbReference>
<dbReference type="GO" id="GO:0050061">
    <property type="term" value="F:long-chain fatty aldehyde dehydrogenase (NAD+) activity"/>
    <property type="evidence" value="ECO:0000250"/>
    <property type="project" value="UniProtKB"/>
</dbReference>
<dbReference type="GO" id="GO:0052814">
    <property type="term" value="F:medium-chain fatty aldehyde dehydrogenase (NAD+) activity"/>
    <property type="evidence" value="ECO:0000250"/>
    <property type="project" value="UniProtKB"/>
</dbReference>
<dbReference type="GO" id="GO:0006631">
    <property type="term" value="P:fatty acid metabolic process"/>
    <property type="evidence" value="ECO:0007669"/>
    <property type="project" value="UniProtKB-KW"/>
</dbReference>
<dbReference type="GO" id="GO:0046458">
    <property type="term" value="P:hexadecanal metabolic process"/>
    <property type="evidence" value="ECO:0000250"/>
    <property type="project" value="UniProtKB"/>
</dbReference>
<dbReference type="CDD" id="cd07132">
    <property type="entry name" value="ALDH_F3AB"/>
    <property type="match status" value="1"/>
</dbReference>
<dbReference type="FunFam" id="3.40.309.10:FF:000003">
    <property type="entry name" value="Aldehyde dehydrogenase"/>
    <property type="match status" value="1"/>
</dbReference>
<dbReference type="FunFam" id="3.40.605.10:FF:000004">
    <property type="entry name" value="Aldehyde dehydrogenase"/>
    <property type="match status" value="1"/>
</dbReference>
<dbReference type="Gene3D" id="3.40.605.10">
    <property type="entry name" value="Aldehyde Dehydrogenase, Chain A, domain 1"/>
    <property type="match status" value="1"/>
</dbReference>
<dbReference type="Gene3D" id="3.40.309.10">
    <property type="entry name" value="Aldehyde Dehydrogenase, Chain A, domain 2"/>
    <property type="match status" value="1"/>
</dbReference>
<dbReference type="InterPro" id="IPR016161">
    <property type="entry name" value="Ald_DH/histidinol_DH"/>
</dbReference>
<dbReference type="InterPro" id="IPR016163">
    <property type="entry name" value="Ald_DH_C"/>
</dbReference>
<dbReference type="InterPro" id="IPR016160">
    <property type="entry name" value="Ald_DH_CS_CYS"/>
</dbReference>
<dbReference type="InterPro" id="IPR029510">
    <property type="entry name" value="Ald_DH_CS_GLU"/>
</dbReference>
<dbReference type="InterPro" id="IPR016162">
    <property type="entry name" value="Ald_DH_N"/>
</dbReference>
<dbReference type="InterPro" id="IPR015590">
    <property type="entry name" value="Aldehyde_DH_dom"/>
</dbReference>
<dbReference type="InterPro" id="IPR012394">
    <property type="entry name" value="Aldehyde_DH_NAD(P)"/>
</dbReference>
<dbReference type="PANTHER" id="PTHR43570">
    <property type="entry name" value="ALDEHYDE DEHYDROGENASE"/>
    <property type="match status" value="1"/>
</dbReference>
<dbReference type="PANTHER" id="PTHR43570:SF9">
    <property type="entry name" value="ALDEHYDE DEHYDROGENASE FAMILY 3 MEMBER A2"/>
    <property type="match status" value="1"/>
</dbReference>
<dbReference type="Pfam" id="PF00171">
    <property type="entry name" value="Aldedh"/>
    <property type="match status" value="1"/>
</dbReference>
<dbReference type="PIRSF" id="PIRSF036492">
    <property type="entry name" value="ALDH"/>
    <property type="match status" value="1"/>
</dbReference>
<dbReference type="SUPFAM" id="SSF53720">
    <property type="entry name" value="ALDH-like"/>
    <property type="match status" value="1"/>
</dbReference>
<dbReference type="PROSITE" id="PS00070">
    <property type="entry name" value="ALDEHYDE_DEHYDR_CYS"/>
    <property type="match status" value="1"/>
</dbReference>
<dbReference type="PROSITE" id="PS00687">
    <property type="entry name" value="ALDEHYDE_DEHYDR_GLU"/>
    <property type="match status" value="1"/>
</dbReference>
<comment type="function">
    <text evidence="3">Catalyzes the oxidation of medium and long-chain aliphatic aldehydes to fatty acids. Active on a variety of saturated and unsaturated aliphatic aldehydes between 6 and 24 carbons in length. Responsible for conversion of the sphingosine 1-phosphate (S1P) degradation product hexadecenal to hexadecenoic acid.</text>
</comment>
<comment type="catalytic activity">
    <reaction evidence="3">
        <text>an aldehyde + NAD(+) + H2O = a carboxylate + NADH + 2 H(+)</text>
        <dbReference type="Rhea" id="RHEA:16185"/>
        <dbReference type="ChEBI" id="CHEBI:15377"/>
        <dbReference type="ChEBI" id="CHEBI:15378"/>
        <dbReference type="ChEBI" id="CHEBI:17478"/>
        <dbReference type="ChEBI" id="CHEBI:29067"/>
        <dbReference type="ChEBI" id="CHEBI:57540"/>
        <dbReference type="ChEBI" id="CHEBI:57945"/>
        <dbReference type="EC" id="1.2.1.3"/>
    </reaction>
</comment>
<comment type="catalytic activity">
    <reaction evidence="3">
        <text>a fatty aldehyde + NAD(+) + H2O = a fatty acid + NADH + 2 H(+)</text>
        <dbReference type="Rhea" id="RHEA:49832"/>
        <dbReference type="ChEBI" id="CHEBI:15377"/>
        <dbReference type="ChEBI" id="CHEBI:15378"/>
        <dbReference type="ChEBI" id="CHEBI:28868"/>
        <dbReference type="ChEBI" id="CHEBI:35746"/>
        <dbReference type="ChEBI" id="CHEBI:57540"/>
        <dbReference type="ChEBI" id="CHEBI:57945"/>
    </reaction>
</comment>
<comment type="catalytic activity">
    <reaction evidence="3">
        <text>(2E)-hexadecenal + NAD(+) + H2O = (E)-hexadec-2-enoate + NADH + 2 H(+)</text>
        <dbReference type="Rhea" id="RHEA:36135"/>
        <dbReference type="ChEBI" id="CHEBI:15377"/>
        <dbReference type="ChEBI" id="CHEBI:15378"/>
        <dbReference type="ChEBI" id="CHEBI:17585"/>
        <dbReference type="ChEBI" id="CHEBI:57540"/>
        <dbReference type="ChEBI" id="CHEBI:57945"/>
        <dbReference type="ChEBI" id="CHEBI:72745"/>
    </reaction>
</comment>
<comment type="catalytic activity">
    <reaction evidence="3">
        <text>hexadecanoate + NADH + 2 H(+) = hexadecanal + NAD(+) + H2O</text>
        <dbReference type="Rhea" id="RHEA:33739"/>
        <dbReference type="ChEBI" id="CHEBI:7896"/>
        <dbReference type="ChEBI" id="CHEBI:15377"/>
        <dbReference type="ChEBI" id="CHEBI:15378"/>
        <dbReference type="ChEBI" id="CHEBI:17600"/>
        <dbReference type="ChEBI" id="CHEBI:57540"/>
        <dbReference type="ChEBI" id="CHEBI:57945"/>
    </reaction>
</comment>
<comment type="catalytic activity">
    <reaction evidence="3">
        <text>22-oxodocosanoate + NAD(+) + H2O = docosanedioate + NADH + 2 H(+)</text>
        <dbReference type="Rhea" id="RHEA:39015"/>
        <dbReference type="ChEBI" id="CHEBI:15377"/>
        <dbReference type="ChEBI" id="CHEBI:15378"/>
        <dbReference type="ChEBI" id="CHEBI:57540"/>
        <dbReference type="ChEBI" id="CHEBI:57945"/>
        <dbReference type="ChEBI" id="CHEBI:76298"/>
        <dbReference type="ChEBI" id="CHEBI:76299"/>
    </reaction>
</comment>
<comment type="catalytic activity">
    <reaction evidence="3">
        <text>2,6,10,14-tetramethylpentadecanal + NAD(+) + H2O = 2,6,10,14-tetramethylpentadecanoate + NADH + 2 H(+)</text>
        <dbReference type="Rhea" id="RHEA:44016"/>
        <dbReference type="ChEBI" id="CHEBI:15377"/>
        <dbReference type="ChEBI" id="CHEBI:15378"/>
        <dbReference type="ChEBI" id="CHEBI:49189"/>
        <dbReference type="ChEBI" id="CHEBI:57540"/>
        <dbReference type="ChEBI" id="CHEBI:57945"/>
        <dbReference type="ChEBI" id="CHEBI:77268"/>
    </reaction>
</comment>
<comment type="catalytic activity">
    <reaction evidence="3">
        <text>octadecanal + NAD(+) + H2O = octadecanoate + NADH + 2 H(+)</text>
        <dbReference type="Rhea" id="RHEA:44020"/>
        <dbReference type="ChEBI" id="CHEBI:15377"/>
        <dbReference type="ChEBI" id="CHEBI:15378"/>
        <dbReference type="ChEBI" id="CHEBI:17034"/>
        <dbReference type="ChEBI" id="CHEBI:25629"/>
        <dbReference type="ChEBI" id="CHEBI:57540"/>
        <dbReference type="ChEBI" id="CHEBI:57945"/>
    </reaction>
</comment>
<comment type="catalytic activity">
    <reaction evidence="3">
        <text>dodecanoate + NADH + 2 H(+) = dodecanal + NAD(+) + H2O</text>
        <dbReference type="Rhea" id="RHEA:44168"/>
        <dbReference type="ChEBI" id="CHEBI:15377"/>
        <dbReference type="ChEBI" id="CHEBI:15378"/>
        <dbReference type="ChEBI" id="CHEBI:18262"/>
        <dbReference type="ChEBI" id="CHEBI:27836"/>
        <dbReference type="ChEBI" id="CHEBI:57540"/>
        <dbReference type="ChEBI" id="CHEBI:57945"/>
    </reaction>
</comment>
<comment type="catalytic activity">
    <reaction evidence="3">
        <text>decanal + NAD(+) + H2O = decanoate + NADH + 2 H(+)</text>
        <dbReference type="Rhea" id="RHEA:44104"/>
        <dbReference type="ChEBI" id="CHEBI:15377"/>
        <dbReference type="ChEBI" id="CHEBI:15378"/>
        <dbReference type="ChEBI" id="CHEBI:27689"/>
        <dbReference type="ChEBI" id="CHEBI:31457"/>
        <dbReference type="ChEBI" id="CHEBI:57540"/>
        <dbReference type="ChEBI" id="CHEBI:57945"/>
    </reaction>
</comment>
<comment type="catalytic activity">
    <reaction evidence="3">
        <text>tetradecanal + NAD(+) + H2O = tetradecanoate + NADH + 2 H(+)</text>
        <dbReference type="Rhea" id="RHEA:44172"/>
        <dbReference type="ChEBI" id="CHEBI:15377"/>
        <dbReference type="ChEBI" id="CHEBI:15378"/>
        <dbReference type="ChEBI" id="CHEBI:30807"/>
        <dbReference type="ChEBI" id="CHEBI:57540"/>
        <dbReference type="ChEBI" id="CHEBI:57945"/>
        <dbReference type="ChEBI" id="CHEBI:84067"/>
    </reaction>
</comment>
<comment type="catalytic activity">
    <reaction evidence="3">
        <text>octanal + NAD(+) + H2O = octanoate + NADH + 2 H(+)</text>
        <dbReference type="Rhea" id="RHEA:44100"/>
        <dbReference type="ChEBI" id="CHEBI:15377"/>
        <dbReference type="ChEBI" id="CHEBI:15378"/>
        <dbReference type="ChEBI" id="CHEBI:17935"/>
        <dbReference type="ChEBI" id="CHEBI:25646"/>
        <dbReference type="ChEBI" id="CHEBI:57540"/>
        <dbReference type="ChEBI" id="CHEBI:57945"/>
    </reaction>
</comment>
<comment type="catalytic activity">
    <reaction evidence="3">
        <text>heptanal + NAD(+) + H2O = heptanoate + NADH + 2 H(+)</text>
        <dbReference type="Rhea" id="RHEA:44108"/>
        <dbReference type="ChEBI" id="CHEBI:15377"/>
        <dbReference type="ChEBI" id="CHEBI:15378"/>
        <dbReference type="ChEBI" id="CHEBI:32362"/>
        <dbReference type="ChEBI" id="CHEBI:34787"/>
        <dbReference type="ChEBI" id="CHEBI:57540"/>
        <dbReference type="ChEBI" id="CHEBI:57945"/>
    </reaction>
</comment>
<comment type="catalytic activity">
    <reaction evidence="3">
        <text>(2E,6E)-farnesal + NAD(+) + H2O = (2E,6E)-farnesoate + NADH + 2 H(+)</text>
        <dbReference type="Rhea" id="RHEA:24216"/>
        <dbReference type="ChEBI" id="CHEBI:15377"/>
        <dbReference type="ChEBI" id="CHEBI:15378"/>
        <dbReference type="ChEBI" id="CHEBI:15894"/>
        <dbReference type="ChEBI" id="CHEBI:57540"/>
        <dbReference type="ChEBI" id="CHEBI:57945"/>
        <dbReference type="ChEBI" id="CHEBI:83276"/>
        <dbReference type="EC" id="1.2.1.94"/>
    </reaction>
</comment>
<comment type="subunit">
    <text evidence="3">Homodimer.</text>
</comment>
<comment type="subcellular location">
    <subcellularLocation>
        <location evidence="3">Microsome membrane</location>
        <topology evidence="3">Single-pass membrane protein</topology>
    </subcellularLocation>
    <subcellularLocation>
        <location evidence="3">Endoplasmic reticulum membrane</location>
        <topology evidence="3">Single-pass membrane protein</topology>
        <orientation evidence="2">Cytoplasmic side</orientation>
    </subcellularLocation>
</comment>
<comment type="similarity">
    <text evidence="7">Belongs to the aldehyde dehydrogenase family.</text>
</comment>
<proteinExistence type="evidence at transcript level"/>
<name>AL3A2_PONAB</name>
<gene>
    <name type="primary">ALDH3A2</name>
</gene>
<evidence type="ECO:0000250" key="1"/>
<evidence type="ECO:0000250" key="2">
    <source>
        <dbReference type="UniProtKB" id="P30839"/>
    </source>
</evidence>
<evidence type="ECO:0000250" key="3">
    <source>
        <dbReference type="UniProtKB" id="P51648"/>
    </source>
</evidence>
<evidence type="ECO:0000255" key="4"/>
<evidence type="ECO:0000255" key="5">
    <source>
        <dbReference type="PROSITE-ProRule" id="PRU10007"/>
    </source>
</evidence>
<evidence type="ECO:0000255" key="6">
    <source>
        <dbReference type="PROSITE-ProRule" id="PRU10008"/>
    </source>
</evidence>
<evidence type="ECO:0000305" key="7"/>
<keyword id="KW-0256">Endoplasmic reticulum</keyword>
<keyword id="KW-0276">Fatty acid metabolism</keyword>
<keyword id="KW-0443">Lipid metabolism</keyword>
<keyword id="KW-0472">Membrane</keyword>
<keyword id="KW-0492">Microsome</keyword>
<keyword id="KW-0520">NAD</keyword>
<keyword id="KW-0560">Oxidoreductase</keyword>
<keyword id="KW-0597">Phosphoprotein</keyword>
<keyword id="KW-1185">Reference proteome</keyword>
<keyword id="KW-0812">Transmembrane</keyword>
<keyword id="KW-1133">Transmembrane helix</keyword>